<reference key="1">
    <citation type="journal article" date="1993" name="Phytochemistry">
        <title>Sequences of acidic and basic elicitin isoforms secreted by Phytophthora megasperma megasperma.</title>
        <authorList>
            <person name="Huet J.-C."/>
            <person name="Pernollet J.-C."/>
        </authorList>
    </citation>
    <scope>PROTEIN SEQUENCE</scope>
</reference>
<protein>
    <recommendedName>
        <fullName>Beta-elicitin MGM-beta</fullName>
    </recommendedName>
</protein>
<proteinExistence type="evidence at protein level"/>
<organism>
    <name type="scientific">Phytophthora megasperma</name>
    <name type="common">Potato pink rot fungus</name>
    <dbReference type="NCBI Taxonomy" id="4788"/>
    <lineage>
        <taxon>Eukaryota</taxon>
        <taxon>Sar</taxon>
        <taxon>Stramenopiles</taxon>
        <taxon>Oomycota</taxon>
        <taxon>Peronosporales</taxon>
        <taxon>Peronosporaceae</taxon>
        <taxon>Phytophthora</taxon>
    </lineage>
</organism>
<feature type="chain" id="PRO_0000185441" description="Beta-elicitin MGM-beta">
    <location>
        <begin position="1"/>
        <end position="98"/>
    </location>
</feature>
<feature type="disulfide bond" evidence="1">
    <location>
        <begin position="3"/>
        <end position="71"/>
    </location>
</feature>
<feature type="disulfide bond" evidence="1">
    <location>
        <begin position="27"/>
        <end position="56"/>
    </location>
</feature>
<feature type="disulfide bond" evidence="1">
    <location>
        <begin position="51"/>
        <end position="95"/>
    </location>
</feature>
<evidence type="ECO:0000250" key="1"/>
<evidence type="ECO:0000305" key="2"/>
<accession>P35699</accession>
<keyword id="KW-0903">Direct protein sequencing</keyword>
<keyword id="KW-1015">Disulfide bond</keyword>
<keyword id="KW-0928">Hypersensitive response elicitation</keyword>
<keyword id="KW-0964">Secreted</keyword>
<sequence length="98" mass="10379">TACTTTQQTAAYKTLVSILSESSFNQCSKDSGYSMLTATALPTNAQYKLMCASTACKSMINKIVVLNPPDCDLTVPTSGLVLDVYTYANGFSTKCASL</sequence>
<dbReference type="SMR" id="P35699"/>
<dbReference type="GO" id="GO:0005576">
    <property type="term" value="C:extracellular region"/>
    <property type="evidence" value="ECO:0007669"/>
    <property type="project" value="UniProtKB-SubCell"/>
</dbReference>
<dbReference type="GO" id="GO:0052040">
    <property type="term" value="P:symbiont-mediated perturbation of host programmed cell death"/>
    <property type="evidence" value="ECO:0007669"/>
    <property type="project" value="UniProtKB-KW"/>
</dbReference>
<dbReference type="Gene3D" id="1.10.239.10">
    <property type="entry name" value="Elicitin domain"/>
    <property type="match status" value="1"/>
</dbReference>
<dbReference type="InterPro" id="IPR002200">
    <property type="entry name" value="Elicitin"/>
</dbReference>
<dbReference type="InterPro" id="IPR036470">
    <property type="entry name" value="Elicitin_sf"/>
</dbReference>
<dbReference type="Pfam" id="PF00964">
    <property type="entry name" value="Elicitin"/>
    <property type="match status" value="1"/>
</dbReference>
<dbReference type="PRINTS" id="PR00948">
    <property type="entry name" value="ELICITIN"/>
</dbReference>
<dbReference type="SMART" id="SM01187">
    <property type="entry name" value="Elicitin"/>
    <property type="match status" value="1"/>
</dbReference>
<dbReference type="SUPFAM" id="SSF48647">
    <property type="entry name" value="Fungal elicitin"/>
    <property type="match status" value="1"/>
</dbReference>
<comment type="function">
    <text>Induces local and distal defense responses (incompatible hypersensitive reaction) in plants from the solanaceae and cruciferae families. Elicits leaf necrosis and causes the accumulation of pathogenesis-related proteins. Might interact with the lipidic molecules of the plasma membrane.</text>
</comment>
<comment type="subcellular location">
    <subcellularLocation>
        <location>Secreted</location>
    </subcellularLocation>
</comment>
<comment type="similarity">
    <text evidence="2">Belongs to the elicitin family.</text>
</comment>
<name>ELIB_PHYME</name>